<organism>
    <name type="scientific">Haemophilus influenzae (strain ATCC 51907 / DSM 11121 / KW20 / Rd)</name>
    <dbReference type="NCBI Taxonomy" id="71421"/>
    <lineage>
        <taxon>Bacteria</taxon>
        <taxon>Pseudomonadati</taxon>
        <taxon>Pseudomonadota</taxon>
        <taxon>Gammaproteobacteria</taxon>
        <taxon>Pasteurellales</taxon>
        <taxon>Pasteurellaceae</taxon>
        <taxon>Haemophilus</taxon>
    </lineage>
</organism>
<accession>P44059</accession>
<keyword id="KW-1185">Reference proteome</keyword>
<proteinExistence type="predicted"/>
<gene>
    <name type="ordered locus">HI_0843</name>
</gene>
<reference key="1">
    <citation type="journal article" date="1995" name="Science">
        <title>Whole-genome random sequencing and assembly of Haemophilus influenzae Rd.</title>
        <authorList>
            <person name="Fleischmann R.D."/>
            <person name="Adams M.D."/>
            <person name="White O."/>
            <person name="Clayton R.A."/>
            <person name="Kirkness E.F."/>
            <person name="Kerlavage A.R."/>
            <person name="Bult C.J."/>
            <person name="Tomb J.-F."/>
            <person name="Dougherty B.A."/>
            <person name="Merrick J.M."/>
            <person name="McKenney K."/>
            <person name="Sutton G.G."/>
            <person name="FitzHugh W."/>
            <person name="Fields C.A."/>
            <person name="Gocayne J.D."/>
            <person name="Scott J.D."/>
            <person name="Shirley R."/>
            <person name="Liu L.-I."/>
            <person name="Glodek A."/>
            <person name="Kelley J.M."/>
            <person name="Weidman J.F."/>
            <person name="Phillips C.A."/>
            <person name="Spriggs T."/>
            <person name="Hedblom E."/>
            <person name="Cotton M.D."/>
            <person name="Utterback T.R."/>
            <person name="Hanna M.C."/>
            <person name="Nguyen D.T."/>
            <person name="Saudek D.M."/>
            <person name="Brandon R.C."/>
            <person name="Fine L.D."/>
            <person name="Fritchman J.L."/>
            <person name="Fuhrmann J.L."/>
            <person name="Geoghagen N.S.M."/>
            <person name="Gnehm C.L."/>
            <person name="McDonald L.A."/>
            <person name="Small K.V."/>
            <person name="Fraser C.M."/>
            <person name="Smith H.O."/>
            <person name="Venter J.C."/>
        </authorList>
    </citation>
    <scope>NUCLEOTIDE SEQUENCE [LARGE SCALE GENOMIC DNA]</scope>
    <source>
        <strain>ATCC 51907 / DSM 11121 / KW20 / Rd</strain>
    </source>
</reference>
<protein>
    <recommendedName>
        <fullName>Uncharacterized protein HI_0843</fullName>
    </recommendedName>
</protein>
<name>Y843_HAEIN</name>
<sequence length="45" mass="4966">MVPLCEGDLWQELSLLAAGCRFPHLDEMVNIASINGRKVLGLELI</sequence>
<feature type="chain" id="PRO_0000077959" description="Uncharacterized protein HI_0843">
    <location>
        <begin position="1"/>
        <end position="45"/>
    </location>
</feature>
<dbReference type="EMBL" id="L42023">
    <property type="protein sequence ID" value="AAC22511.1"/>
    <property type="molecule type" value="Genomic_DNA"/>
</dbReference>
<dbReference type="PIR" id="E64014">
    <property type="entry name" value="E64014"/>
</dbReference>
<dbReference type="STRING" id="71421.HI_0843"/>
<dbReference type="EnsemblBacteria" id="AAC22511">
    <property type="protein sequence ID" value="AAC22511"/>
    <property type="gene ID" value="HI_0843"/>
</dbReference>
<dbReference type="KEGG" id="hin:HI_0843"/>
<dbReference type="eggNOG" id="COG0402">
    <property type="taxonomic scope" value="Bacteria"/>
</dbReference>
<dbReference type="HOGENOM" id="CLU_3200453_0_0_6"/>
<dbReference type="Proteomes" id="UP000000579">
    <property type="component" value="Chromosome"/>
</dbReference>